<gene>
    <name type="primary">rbbp4-b</name>
    <name type="synonym">rbap48-b</name>
</gene>
<name>RBP4B_XENLA</name>
<dbReference type="EMBL" id="BC072311">
    <property type="protein sequence ID" value="AAH72311.1"/>
    <property type="molecule type" value="mRNA"/>
</dbReference>
<dbReference type="RefSeq" id="NP_001085185.1">
    <property type="nucleotide sequence ID" value="NM_001091716.1"/>
</dbReference>
<dbReference type="SMR" id="Q6INH0"/>
<dbReference type="DNASU" id="432269"/>
<dbReference type="GeneID" id="432269"/>
<dbReference type="KEGG" id="xla:432269"/>
<dbReference type="AGR" id="Xenbase:XB-GENE-6255728"/>
<dbReference type="CTD" id="432269"/>
<dbReference type="Xenbase" id="XB-GENE-6255728">
    <property type="gene designation" value="rbbp4.S"/>
</dbReference>
<dbReference type="OrthoDB" id="427795at2759"/>
<dbReference type="Proteomes" id="UP000186698">
    <property type="component" value="Chromosome 2S"/>
</dbReference>
<dbReference type="Bgee" id="432269">
    <property type="expression patterns" value="Expressed in blastula and 19 other cell types or tissues"/>
</dbReference>
<dbReference type="GO" id="GO:0033186">
    <property type="term" value="C:CAF-1 complex"/>
    <property type="evidence" value="ECO:0000250"/>
    <property type="project" value="UniProtKB"/>
</dbReference>
<dbReference type="GO" id="GO:0000781">
    <property type="term" value="C:chromosome, telomeric region"/>
    <property type="evidence" value="ECO:0007669"/>
    <property type="project" value="UniProtKB-SubCell"/>
</dbReference>
<dbReference type="GO" id="GO:0035098">
    <property type="term" value="C:ESC/E(Z) complex"/>
    <property type="evidence" value="ECO:0000250"/>
    <property type="project" value="UniProtKB"/>
</dbReference>
<dbReference type="GO" id="GO:0005634">
    <property type="term" value="C:nucleus"/>
    <property type="evidence" value="ECO:0000250"/>
    <property type="project" value="HGNC-UCL"/>
</dbReference>
<dbReference type="GO" id="GO:0016581">
    <property type="term" value="C:NuRD complex"/>
    <property type="evidence" value="ECO:0000318"/>
    <property type="project" value="GO_Central"/>
</dbReference>
<dbReference type="GO" id="GO:0042393">
    <property type="term" value="F:histone binding"/>
    <property type="evidence" value="ECO:0000318"/>
    <property type="project" value="GO_Central"/>
</dbReference>
<dbReference type="GO" id="GO:0006338">
    <property type="term" value="P:chromatin remodeling"/>
    <property type="evidence" value="ECO:0000250"/>
    <property type="project" value="HGNC-UCL"/>
</dbReference>
<dbReference type="GO" id="GO:0006260">
    <property type="term" value="P:DNA replication"/>
    <property type="evidence" value="ECO:0007669"/>
    <property type="project" value="UniProtKB-KW"/>
</dbReference>
<dbReference type="GO" id="GO:0006335">
    <property type="term" value="P:DNA replication-dependent chromatin assembly"/>
    <property type="evidence" value="ECO:0000250"/>
    <property type="project" value="UniProtKB"/>
</dbReference>
<dbReference type="GO" id="GO:0006355">
    <property type="term" value="P:regulation of DNA-templated transcription"/>
    <property type="evidence" value="ECO:0000318"/>
    <property type="project" value="GO_Central"/>
</dbReference>
<dbReference type="FunFam" id="2.130.10.10:FF:000021">
    <property type="entry name" value="histone-binding protein RBBP4 isoform X1"/>
    <property type="match status" value="1"/>
</dbReference>
<dbReference type="Gene3D" id="2.130.10.10">
    <property type="entry name" value="YVTN repeat-like/Quinoprotein amine dehydrogenase"/>
    <property type="match status" value="1"/>
</dbReference>
<dbReference type="InterPro" id="IPR020472">
    <property type="entry name" value="G-protein_beta_WD-40_rep"/>
</dbReference>
<dbReference type="InterPro" id="IPR022052">
    <property type="entry name" value="Histone-bd_RBBP4-like_N"/>
</dbReference>
<dbReference type="InterPro" id="IPR015943">
    <property type="entry name" value="WD40/YVTN_repeat-like_dom_sf"/>
</dbReference>
<dbReference type="InterPro" id="IPR019775">
    <property type="entry name" value="WD40_repeat_CS"/>
</dbReference>
<dbReference type="InterPro" id="IPR036322">
    <property type="entry name" value="WD40_repeat_dom_sf"/>
</dbReference>
<dbReference type="InterPro" id="IPR001680">
    <property type="entry name" value="WD40_rpt"/>
</dbReference>
<dbReference type="InterPro" id="IPR050459">
    <property type="entry name" value="WD_repeat_RBAP46/RBAP48/MSI1"/>
</dbReference>
<dbReference type="PANTHER" id="PTHR22850">
    <property type="entry name" value="WD40 REPEAT FAMILY"/>
    <property type="match status" value="1"/>
</dbReference>
<dbReference type="Pfam" id="PF12265">
    <property type="entry name" value="CAF1C_H4-bd"/>
    <property type="match status" value="1"/>
</dbReference>
<dbReference type="Pfam" id="PF00400">
    <property type="entry name" value="WD40"/>
    <property type="match status" value="5"/>
</dbReference>
<dbReference type="PRINTS" id="PR00320">
    <property type="entry name" value="GPROTEINBRPT"/>
</dbReference>
<dbReference type="SMART" id="SM00320">
    <property type="entry name" value="WD40"/>
    <property type="match status" value="6"/>
</dbReference>
<dbReference type="SUPFAM" id="SSF50978">
    <property type="entry name" value="WD40 repeat-like"/>
    <property type="match status" value="1"/>
</dbReference>
<dbReference type="PROSITE" id="PS00678">
    <property type="entry name" value="WD_REPEATS_1"/>
    <property type="match status" value="3"/>
</dbReference>
<dbReference type="PROSITE" id="PS50082">
    <property type="entry name" value="WD_REPEATS_2"/>
    <property type="match status" value="5"/>
</dbReference>
<dbReference type="PROSITE" id="PS50294">
    <property type="entry name" value="WD_REPEATS_REGION"/>
    <property type="match status" value="1"/>
</dbReference>
<organism>
    <name type="scientific">Xenopus laevis</name>
    <name type="common">African clawed frog</name>
    <dbReference type="NCBI Taxonomy" id="8355"/>
    <lineage>
        <taxon>Eukaryota</taxon>
        <taxon>Metazoa</taxon>
        <taxon>Chordata</taxon>
        <taxon>Craniata</taxon>
        <taxon>Vertebrata</taxon>
        <taxon>Euteleostomi</taxon>
        <taxon>Amphibia</taxon>
        <taxon>Batrachia</taxon>
        <taxon>Anura</taxon>
        <taxon>Pipoidea</taxon>
        <taxon>Pipidae</taxon>
        <taxon>Xenopodinae</taxon>
        <taxon>Xenopus</taxon>
        <taxon>Xenopus</taxon>
    </lineage>
</organism>
<comment type="function">
    <text evidence="2">Core histone-binding subunit that may target chromatin assembly factors, chromatin remodeling factors and histone deacetylases to their histone substrates in a manner that is regulated by nucleosomal DNA (By similarity). Component of several complexes which regulate chromatin metabolism (By similarity).</text>
</comment>
<comment type="subunit">
    <text evidence="2 3 5">Binds directly to histone H4, probably via helix 1 of the histone fold, a region that is not accessible when histone H4 is in chromatin (By similarity). Probably forms a large corepressor complex that contains ncor1, sin3a, hdac1-A and/or hdac1-B, hdac2, rbbp4-A and/or rbbp4-B and possibly rbbp7 (PubMed:11254656).</text>
</comment>
<comment type="subcellular location">
    <subcellularLocation>
        <location evidence="4">Nucleus</location>
    </subcellularLocation>
    <subcellularLocation>
        <location evidence="3">Chromosome</location>
        <location evidence="3">Telomere</location>
    </subcellularLocation>
</comment>
<comment type="similarity">
    <text evidence="6">Belongs to the WD repeat RBAP46/RBAP48/MSI1 family.</text>
</comment>
<evidence type="ECO:0000250" key="1"/>
<evidence type="ECO:0000250" key="2">
    <source>
        <dbReference type="UniProtKB" id="O93377"/>
    </source>
</evidence>
<evidence type="ECO:0000250" key="3">
    <source>
        <dbReference type="UniProtKB" id="Q09028"/>
    </source>
</evidence>
<evidence type="ECO:0000269" key="4">
    <source>
    </source>
</evidence>
<evidence type="ECO:0000269" key="5">
    <source>
    </source>
</evidence>
<evidence type="ECO:0000305" key="6"/>
<proteinExistence type="evidence at protein level"/>
<keyword id="KW-0007">Acetylation</keyword>
<keyword id="KW-0131">Cell cycle</keyword>
<keyword id="KW-0156">Chromatin regulator</keyword>
<keyword id="KW-0158">Chromosome</keyword>
<keyword id="KW-0235">DNA replication</keyword>
<keyword id="KW-0539">Nucleus</keyword>
<keyword id="KW-1185">Reference proteome</keyword>
<keyword id="KW-0677">Repeat</keyword>
<keyword id="KW-0678">Repressor</keyword>
<keyword id="KW-0779">Telomere</keyword>
<keyword id="KW-0804">Transcription</keyword>
<keyword id="KW-0805">Transcription regulation</keyword>
<keyword id="KW-0853">WD repeat</keyword>
<sequence length="425" mass="47639">MADKEAAFDDAVEERVINEEYKIWKKNTPFLYDLVMTHALEWPSLTAQWLPDVTRPDGKDFSIHRLVLGTHTSDEQNHLVIASVQLPNDDAQFDASHYDSEKGEFGGFGSVSGKIEIEIKINHEGEVNRARYMPQNPCIIATKTPSCDVLVFDYTKHPSKPDPSGECNPDLRLRGHQKEGYGLSWNPNLSGNLLSASDDHTICLWDISAVPKEGKVVDAKTIFTGHTAVVEDVSWHLLHESLFGSVADDQKLMIWDTRSNNTSKPSHSVDAHTAEVNCLSFNPYSEFILATGSADKTVALWDLRNLKLKLHSFESHKDEIFQVQWSPHNETILASSGTDRRLNVWDLSKIGEEQSPEDAEDGPPELLFIHGGHTAKISDFSWNPNEPWVICSVSEDNIMQVWQMAENIYNDEDTEGSVDPEGQGS</sequence>
<feature type="initiator methionine" description="Removed" evidence="1">
    <location>
        <position position="1"/>
    </location>
</feature>
<feature type="chain" id="PRO_0000051191" description="Histone-binding protein RBBP4-B">
    <location>
        <begin position="2"/>
        <end position="425"/>
    </location>
</feature>
<feature type="repeat" description="WD 1" evidence="3">
    <location>
        <begin position="32"/>
        <end position="125"/>
    </location>
</feature>
<feature type="repeat" description="WD 2" evidence="3">
    <location>
        <begin position="126"/>
        <end position="175"/>
    </location>
</feature>
<feature type="repeat" description="WD 3" evidence="3">
    <location>
        <begin position="176"/>
        <end position="223"/>
    </location>
</feature>
<feature type="repeat" description="WD 4" evidence="3">
    <location>
        <begin position="225"/>
        <end position="270"/>
    </location>
</feature>
<feature type="repeat" description="WD 5" evidence="3">
    <location>
        <begin position="271"/>
        <end position="314"/>
    </location>
</feature>
<feature type="repeat" description="WD 6" evidence="3">
    <location>
        <begin position="315"/>
        <end position="371"/>
    </location>
</feature>
<feature type="repeat" description="WD 7" evidence="3">
    <location>
        <begin position="372"/>
        <end position="404"/>
    </location>
</feature>
<feature type="modified residue" description="N-acetylalanine" evidence="1">
    <location>
        <position position="2"/>
    </location>
</feature>
<reference key="1">
    <citation type="submission" date="2004-06" db="EMBL/GenBank/DDBJ databases">
        <authorList>
            <consortium name="NIH - Xenopus Gene Collection (XGC) project"/>
        </authorList>
    </citation>
    <scope>NUCLEOTIDE SEQUENCE [LARGE SCALE MRNA]</scope>
    <source>
        <tissue>Ovary</tissue>
    </source>
</reference>
<reference key="2">
    <citation type="journal article" date="1999" name="Mol. Cell. Biol.">
        <title>Functional analysis of the SIN3-histone deacetylase RPD3-RbAp48-histone H4 connection in the Xenopus oocyte.</title>
        <authorList>
            <person name="Vermaak D."/>
            <person name="Wade P.A."/>
            <person name="Jones P.L."/>
            <person name="Shi Y.-B."/>
            <person name="Wolffe A.P."/>
        </authorList>
    </citation>
    <scope>SUBCELLULAR LOCATION</scope>
</reference>
<reference key="3">
    <citation type="journal article" date="2001" name="J. Biol. Chem.">
        <title>Multiple N-CoR complexes contain distinct histone deacetylases.</title>
        <authorList>
            <person name="Jones P.L."/>
            <person name="Sachs L.M."/>
            <person name="Rouse N."/>
            <person name="Wade P.A."/>
            <person name="Shi Y.-B."/>
        </authorList>
    </citation>
    <scope>INTERACTION WITH HDAC1; HDAC2; NCOR1 AND SIN3A</scope>
</reference>
<protein>
    <recommendedName>
        <fullName>Histone-binding protein RBBP4-B</fullName>
    </recommendedName>
    <alternativeName>
        <fullName>Retinoblastoma-binding protein 4-B</fullName>
        <shortName>RBBP-4-B</shortName>
    </alternativeName>
    <alternativeName>
        <fullName>Retinoblastoma-binding protein p48-B</fullName>
    </alternativeName>
</protein>
<accession>Q6INH0</accession>